<evidence type="ECO:0000255" key="1">
    <source>
        <dbReference type="HAMAP-Rule" id="MF_00171"/>
    </source>
</evidence>
<proteinExistence type="inferred from homology"/>
<accession>Q1GE00</accession>
<dbReference type="EC" id="5.4.99.12" evidence="1"/>
<dbReference type="EMBL" id="CP000377">
    <property type="protein sequence ID" value="ABF65116.1"/>
    <property type="molecule type" value="Genomic_DNA"/>
</dbReference>
<dbReference type="RefSeq" id="WP_011539704.1">
    <property type="nucleotide sequence ID" value="NC_008044.1"/>
</dbReference>
<dbReference type="SMR" id="Q1GE00"/>
<dbReference type="STRING" id="292414.TM1040_2384"/>
<dbReference type="KEGG" id="sit:TM1040_2384"/>
<dbReference type="eggNOG" id="COG0101">
    <property type="taxonomic scope" value="Bacteria"/>
</dbReference>
<dbReference type="HOGENOM" id="CLU_014673_0_2_5"/>
<dbReference type="OrthoDB" id="9811823at2"/>
<dbReference type="Proteomes" id="UP000000636">
    <property type="component" value="Chromosome"/>
</dbReference>
<dbReference type="GO" id="GO:0003723">
    <property type="term" value="F:RNA binding"/>
    <property type="evidence" value="ECO:0007669"/>
    <property type="project" value="InterPro"/>
</dbReference>
<dbReference type="GO" id="GO:0160147">
    <property type="term" value="F:tRNA pseudouridine(38-40) synthase activity"/>
    <property type="evidence" value="ECO:0007669"/>
    <property type="project" value="UniProtKB-EC"/>
</dbReference>
<dbReference type="GO" id="GO:0031119">
    <property type="term" value="P:tRNA pseudouridine synthesis"/>
    <property type="evidence" value="ECO:0007669"/>
    <property type="project" value="UniProtKB-UniRule"/>
</dbReference>
<dbReference type="CDD" id="cd02570">
    <property type="entry name" value="PseudoU_synth_EcTruA"/>
    <property type="match status" value="1"/>
</dbReference>
<dbReference type="FunFam" id="3.30.70.580:FF:000001">
    <property type="entry name" value="tRNA pseudouridine synthase A"/>
    <property type="match status" value="1"/>
</dbReference>
<dbReference type="Gene3D" id="3.30.70.660">
    <property type="entry name" value="Pseudouridine synthase I, catalytic domain, C-terminal subdomain"/>
    <property type="match status" value="1"/>
</dbReference>
<dbReference type="Gene3D" id="3.30.70.580">
    <property type="entry name" value="Pseudouridine synthase I, catalytic domain, N-terminal subdomain"/>
    <property type="match status" value="1"/>
</dbReference>
<dbReference type="HAMAP" id="MF_00171">
    <property type="entry name" value="TruA"/>
    <property type="match status" value="1"/>
</dbReference>
<dbReference type="InterPro" id="IPR020103">
    <property type="entry name" value="PsdUridine_synth_cat_dom_sf"/>
</dbReference>
<dbReference type="InterPro" id="IPR001406">
    <property type="entry name" value="PsdUridine_synth_TruA"/>
</dbReference>
<dbReference type="InterPro" id="IPR020097">
    <property type="entry name" value="PsdUridine_synth_TruA_a/b_dom"/>
</dbReference>
<dbReference type="InterPro" id="IPR020095">
    <property type="entry name" value="PsdUridine_synth_TruA_C"/>
</dbReference>
<dbReference type="InterPro" id="IPR020094">
    <property type="entry name" value="TruA/RsuA/RluB/E/F_N"/>
</dbReference>
<dbReference type="NCBIfam" id="TIGR00071">
    <property type="entry name" value="hisT_truA"/>
    <property type="match status" value="1"/>
</dbReference>
<dbReference type="PANTHER" id="PTHR11142">
    <property type="entry name" value="PSEUDOURIDYLATE SYNTHASE"/>
    <property type="match status" value="1"/>
</dbReference>
<dbReference type="PANTHER" id="PTHR11142:SF0">
    <property type="entry name" value="TRNA PSEUDOURIDINE SYNTHASE-LIKE 1"/>
    <property type="match status" value="1"/>
</dbReference>
<dbReference type="Pfam" id="PF01416">
    <property type="entry name" value="PseudoU_synth_1"/>
    <property type="match status" value="2"/>
</dbReference>
<dbReference type="PIRSF" id="PIRSF001430">
    <property type="entry name" value="tRNA_psdUrid_synth"/>
    <property type="match status" value="1"/>
</dbReference>
<dbReference type="SUPFAM" id="SSF55120">
    <property type="entry name" value="Pseudouridine synthase"/>
    <property type="match status" value="1"/>
</dbReference>
<keyword id="KW-0413">Isomerase</keyword>
<keyword id="KW-1185">Reference proteome</keyword>
<keyword id="KW-0819">tRNA processing</keyword>
<sequence>MPRFALKVEYHGKPFAGWQRQKDQPSVQGAIEAALARIEPGEHTIAAAGRTDTGVHGLGQVAHCDLEKNWDPFRLSEALNYHLKPAPVAIVDAALVDDEWHARFSAVERQYLFRILMRRAPATHDEGQVWQIKHDLDVAAMQAGANMLLGNHDFTTFRSSICQAASPVKTLDELRVERVQGLSGPEVHFHVRARSFLHNQVRSFVGTLERVGTGAWSPEDVKHALEAKDRAACGPVCPGHGLYLARVGYPDPVFSSDRV</sequence>
<comment type="function">
    <text evidence="1">Formation of pseudouridine at positions 38, 39 and 40 in the anticodon stem and loop of transfer RNAs.</text>
</comment>
<comment type="catalytic activity">
    <reaction evidence="1">
        <text>uridine(38/39/40) in tRNA = pseudouridine(38/39/40) in tRNA</text>
        <dbReference type="Rhea" id="RHEA:22376"/>
        <dbReference type="Rhea" id="RHEA-COMP:10085"/>
        <dbReference type="Rhea" id="RHEA-COMP:10087"/>
        <dbReference type="ChEBI" id="CHEBI:65314"/>
        <dbReference type="ChEBI" id="CHEBI:65315"/>
        <dbReference type="EC" id="5.4.99.12"/>
    </reaction>
</comment>
<comment type="subunit">
    <text evidence="1">Homodimer.</text>
</comment>
<comment type="similarity">
    <text evidence="1">Belongs to the tRNA pseudouridine synthase TruA family.</text>
</comment>
<name>TRUA_RUEST</name>
<protein>
    <recommendedName>
        <fullName evidence="1">tRNA pseudouridine synthase A</fullName>
        <ecNumber evidence="1">5.4.99.12</ecNumber>
    </recommendedName>
    <alternativeName>
        <fullName evidence="1">tRNA pseudouridine(38-40) synthase</fullName>
    </alternativeName>
    <alternativeName>
        <fullName evidence="1">tRNA pseudouridylate synthase I</fullName>
    </alternativeName>
    <alternativeName>
        <fullName evidence="1">tRNA-uridine isomerase I</fullName>
    </alternativeName>
</protein>
<feature type="chain" id="PRO_1000017179" description="tRNA pseudouridine synthase A">
    <location>
        <begin position="1"/>
        <end position="259"/>
    </location>
</feature>
<feature type="active site" description="Nucleophile" evidence="1">
    <location>
        <position position="52"/>
    </location>
</feature>
<feature type="binding site" evidence="1">
    <location>
        <position position="111"/>
    </location>
    <ligand>
        <name>substrate</name>
    </ligand>
</feature>
<organism>
    <name type="scientific">Ruegeria sp. (strain TM1040)</name>
    <name type="common">Silicibacter sp.</name>
    <dbReference type="NCBI Taxonomy" id="292414"/>
    <lineage>
        <taxon>Bacteria</taxon>
        <taxon>Pseudomonadati</taxon>
        <taxon>Pseudomonadota</taxon>
        <taxon>Alphaproteobacteria</taxon>
        <taxon>Rhodobacterales</taxon>
        <taxon>Roseobacteraceae</taxon>
        <taxon>Ruegeria</taxon>
    </lineage>
</organism>
<reference key="1">
    <citation type="submission" date="2006-05" db="EMBL/GenBank/DDBJ databases">
        <title>Complete sequence of chromosome of Silicibacter sp. TM1040.</title>
        <authorList>
            <consortium name="US DOE Joint Genome Institute"/>
            <person name="Copeland A."/>
            <person name="Lucas S."/>
            <person name="Lapidus A."/>
            <person name="Barry K."/>
            <person name="Detter J.C."/>
            <person name="Glavina del Rio T."/>
            <person name="Hammon N."/>
            <person name="Israni S."/>
            <person name="Dalin E."/>
            <person name="Tice H."/>
            <person name="Pitluck S."/>
            <person name="Brettin T."/>
            <person name="Bruce D."/>
            <person name="Han C."/>
            <person name="Tapia R."/>
            <person name="Goodwin L."/>
            <person name="Thompson L.S."/>
            <person name="Gilna P."/>
            <person name="Schmutz J."/>
            <person name="Larimer F."/>
            <person name="Land M."/>
            <person name="Hauser L."/>
            <person name="Kyrpides N."/>
            <person name="Kim E."/>
            <person name="Belas R."/>
            <person name="Moran M.A."/>
            <person name="Buchan A."/>
            <person name="Gonzalez J.M."/>
            <person name="Schell M.A."/>
            <person name="Sun F."/>
            <person name="Richardson P."/>
        </authorList>
    </citation>
    <scope>NUCLEOTIDE SEQUENCE [LARGE SCALE GENOMIC DNA]</scope>
    <source>
        <strain>TM1040</strain>
    </source>
</reference>
<gene>
    <name evidence="1" type="primary">truA</name>
    <name type="ordered locus">TM1040_2384</name>
</gene>